<accession>Q91VD1</accession>
<accession>Q3UW90</accession>
<accession>Q8CCA4</accession>
<accession>Q8K2L7</accession>
<accession>Q9JKX2</accession>
<organism>
    <name type="scientific">Mus musculus</name>
    <name type="common">Mouse</name>
    <dbReference type="NCBI Taxonomy" id="10090"/>
    <lineage>
        <taxon>Eukaryota</taxon>
        <taxon>Metazoa</taxon>
        <taxon>Chordata</taxon>
        <taxon>Craniata</taxon>
        <taxon>Vertebrata</taxon>
        <taxon>Euteleostomi</taxon>
        <taxon>Mammalia</taxon>
        <taxon>Eutheria</taxon>
        <taxon>Euarchontoglires</taxon>
        <taxon>Glires</taxon>
        <taxon>Rodentia</taxon>
        <taxon>Myomorpha</taxon>
        <taxon>Muroidea</taxon>
        <taxon>Muridae</taxon>
        <taxon>Murinae</taxon>
        <taxon>Mus</taxon>
        <taxon>Mus</taxon>
    </lineage>
</organism>
<sequence>MSTDEHLDPIPDSFILQPPVFHPVIPYGTTIFGGLYAGKMVTLQGVVPLHARRFQVDFQCGCCLHPQPDVAFRFSPRFYTVKPHVICNTHQGGLWQKEIRWPGVALQRGDSFLILFLFENEEVKVSVNGQHFLHYRYRLPLSRVDTLDISGDILVKAVGFLNINPFVEGSREYPVGYPFLLYSPRLEVPCSRALPRGLWPGQVIVVRGLVLKEPKDFTLSLKDGTTHVPVTLRASFTDRTLAWVSSWGRKKLISAPFLFHPQRFFEVLLLCQEGGLKLALNGQGLGATSLDQKALEQLRELRISGNVHLYCVHC</sequence>
<comment type="function">
    <text>Binds lactose. May participate in the apoptosis of adipocytes.</text>
</comment>
<comment type="subcellular location">
    <subcellularLocation>
        <location>Nucleus</location>
    </subcellularLocation>
</comment>
<comment type="alternative products">
    <event type="alternative splicing"/>
    <isoform>
        <id>Q91VD1-1</id>
        <name>1</name>
        <sequence type="displayed"/>
    </isoform>
    <isoform>
        <id>Q91VD1-2</id>
        <name>2</name>
        <sequence type="described" ref="VSP_010321"/>
    </isoform>
</comment>
<comment type="domain">
    <text>Contains two homologous but distinct carbohydrate-binding domains.</text>
</comment>
<comment type="online information" name="Functional Glycomics Gateway - Glycan Binding">
    <link uri="http://www.functionalglycomics.org/glycomics/GBPServlet?&amp;operationType=view&amp;cbpId=cbp_mou_Stlect_289"/>
    <text>Galectin-12</text>
</comment>
<keyword id="KW-0025">Alternative splicing</keyword>
<keyword id="KW-0053">Apoptosis</keyword>
<keyword id="KW-0430">Lectin</keyword>
<keyword id="KW-0539">Nucleus</keyword>
<keyword id="KW-1185">Reference proteome</keyword>
<keyword id="KW-0677">Repeat</keyword>
<proteinExistence type="evidence at protein level"/>
<evidence type="ECO:0000255" key="1">
    <source>
        <dbReference type="PROSITE-ProRule" id="PRU00639"/>
    </source>
</evidence>
<evidence type="ECO:0000303" key="2">
    <source>
    </source>
</evidence>
<evidence type="ECO:0000305" key="3"/>
<protein>
    <recommendedName>
        <fullName>Galectin-12</fullName>
        <shortName>Gal-12</shortName>
    </recommendedName>
</protein>
<name>LEG12_MOUSE</name>
<reference key="1">
    <citation type="journal article" date="2001" name="J. Biol. Chem.">
        <title>Galectin-12, an adipose-expressed galectin-like molecule possessing apoptosis-inducing activity.</title>
        <authorList>
            <person name="Hotta K."/>
            <person name="Funahashi T."/>
            <person name="Matsukawa Y."/>
            <person name="Takahashi M."/>
            <person name="Nishizawa H."/>
            <person name="Kishida K."/>
            <person name="Matsuda M."/>
            <person name="Kuriyama H."/>
            <person name="Kihara S."/>
            <person name="Nakamura T."/>
            <person name="Tochino Y."/>
            <person name="Bodkin N.L."/>
            <person name="Hansen B.C."/>
            <person name="Matsuzawa Y."/>
        </authorList>
    </citation>
    <scope>NUCLEOTIDE SEQUENCE [MRNA] (ISOFORM 1)</scope>
    <scope>CHARACTERIZATION</scope>
    <source>
        <strain>C57BL/KsK</strain>
        <tissue>Adipose tissue</tissue>
    </source>
</reference>
<reference key="2">
    <citation type="journal article" date="2001" name="J. Biol. Chem.">
        <title>Cell cycle regulation by galectin-12, a new member of the galectin superfamily.</title>
        <authorList>
            <person name="Yang R.-Y."/>
            <person name="Hsu D.K."/>
            <person name="Yu L."/>
            <person name="Ni J."/>
            <person name="Liu F.-T."/>
        </authorList>
    </citation>
    <scope>NUCLEOTIDE SEQUENCE [MRNA] (ISOFORM 1)</scope>
    <source>
        <strain>C57BL/6J</strain>
        <tissue>Spleen</tissue>
    </source>
</reference>
<reference key="3">
    <citation type="journal article" date="2005" name="Science">
        <title>The transcriptional landscape of the mammalian genome.</title>
        <authorList>
            <person name="Carninci P."/>
            <person name="Kasukawa T."/>
            <person name="Katayama S."/>
            <person name="Gough J."/>
            <person name="Frith M.C."/>
            <person name="Maeda N."/>
            <person name="Oyama R."/>
            <person name="Ravasi T."/>
            <person name="Lenhard B."/>
            <person name="Wells C."/>
            <person name="Kodzius R."/>
            <person name="Shimokawa K."/>
            <person name="Bajic V.B."/>
            <person name="Brenner S.E."/>
            <person name="Batalov S."/>
            <person name="Forrest A.R."/>
            <person name="Zavolan M."/>
            <person name="Davis M.J."/>
            <person name="Wilming L.G."/>
            <person name="Aidinis V."/>
            <person name="Allen J.E."/>
            <person name="Ambesi-Impiombato A."/>
            <person name="Apweiler R."/>
            <person name="Aturaliya R.N."/>
            <person name="Bailey T.L."/>
            <person name="Bansal M."/>
            <person name="Baxter L."/>
            <person name="Beisel K.W."/>
            <person name="Bersano T."/>
            <person name="Bono H."/>
            <person name="Chalk A.M."/>
            <person name="Chiu K.P."/>
            <person name="Choudhary V."/>
            <person name="Christoffels A."/>
            <person name="Clutterbuck D.R."/>
            <person name="Crowe M.L."/>
            <person name="Dalla E."/>
            <person name="Dalrymple B.P."/>
            <person name="de Bono B."/>
            <person name="Della Gatta G."/>
            <person name="di Bernardo D."/>
            <person name="Down T."/>
            <person name="Engstrom P."/>
            <person name="Fagiolini M."/>
            <person name="Faulkner G."/>
            <person name="Fletcher C.F."/>
            <person name="Fukushima T."/>
            <person name="Furuno M."/>
            <person name="Futaki S."/>
            <person name="Gariboldi M."/>
            <person name="Georgii-Hemming P."/>
            <person name="Gingeras T.R."/>
            <person name="Gojobori T."/>
            <person name="Green R.E."/>
            <person name="Gustincich S."/>
            <person name="Harbers M."/>
            <person name="Hayashi Y."/>
            <person name="Hensch T.K."/>
            <person name="Hirokawa N."/>
            <person name="Hill D."/>
            <person name="Huminiecki L."/>
            <person name="Iacono M."/>
            <person name="Ikeo K."/>
            <person name="Iwama A."/>
            <person name="Ishikawa T."/>
            <person name="Jakt M."/>
            <person name="Kanapin A."/>
            <person name="Katoh M."/>
            <person name="Kawasawa Y."/>
            <person name="Kelso J."/>
            <person name="Kitamura H."/>
            <person name="Kitano H."/>
            <person name="Kollias G."/>
            <person name="Krishnan S.P."/>
            <person name="Kruger A."/>
            <person name="Kummerfeld S.K."/>
            <person name="Kurochkin I.V."/>
            <person name="Lareau L.F."/>
            <person name="Lazarevic D."/>
            <person name="Lipovich L."/>
            <person name="Liu J."/>
            <person name="Liuni S."/>
            <person name="McWilliam S."/>
            <person name="Madan Babu M."/>
            <person name="Madera M."/>
            <person name="Marchionni L."/>
            <person name="Matsuda H."/>
            <person name="Matsuzawa S."/>
            <person name="Miki H."/>
            <person name="Mignone F."/>
            <person name="Miyake S."/>
            <person name="Morris K."/>
            <person name="Mottagui-Tabar S."/>
            <person name="Mulder N."/>
            <person name="Nakano N."/>
            <person name="Nakauchi H."/>
            <person name="Ng P."/>
            <person name="Nilsson R."/>
            <person name="Nishiguchi S."/>
            <person name="Nishikawa S."/>
            <person name="Nori F."/>
            <person name="Ohara O."/>
            <person name="Okazaki Y."/>
            <person name="Orlando V."/>
            <person name="Pang K.C."/>
            <person name="Pavan W.J."/>
            <person name="Pavesi G."/>
            <person name="Pesole G."/>
            <person name="Petrovsky N."/>
            <person name="Piazza S."/>
            <person name="Reed J."/>
            <person name="Reid J.F."/>
            <person name="Ring B.Z."/>
            <person name="Ringwald M."/>
            <person name="Rost B."/>
            <person name="Ruan Y."/>
            <person name="Salzberg S.L."/>
            <person name="Sandelin A."/>
            <person name="Schneider C."/>
            <person name="Schoenbach C."/>
            <person name="Sekiguchi K."/>
            <person name="Semple C.A."/>
            <person name="Seno S."/>
            <person name="Sessa L."/>
            <person name="Sheng Y."/>
            <person name="Shibata Y."/>
            <person name="Shimada H."/>
            <person name="Shimada K."/>
            <person name="Silva D."/>
            <person name="Sinclair B."/>
            <person name="Sperling S."/>
            <person name="Stupka E."/>
            <person name="Sugiura K."/>
            <person name="Sultana R."/>
            <person name="Takenaka Y."/>
            <person name="Taki K."/>
            <person name="Tammoja K."/>
            <person name="Tan S.L."/>
            <person name="Tang S."/>
            <person name="Taylor M.S."/>
            <person name="Tegner J."/>
            <person name="Teichmann S.A."/>
            <person name="Ueda H.R."/>
            <person name="van Nimwegen E."/>
            <person name="Verardo R."/>
            <person name="Wei C.L."/>
            <person name="Yagi K."/>
            <person name="Yamanishi H."/>
            <person name="Zabarovsky E."/>
            <person name="Zhu S."/>
            <person name="Zimmer A."/>
            <person name="Hide W."/>
            <person name="Bult C."/>
            <person name="Grimmond S.M."/>
            <person name="Teasdale R.D."/>
            <person name="Liu E.T."/>
            <person name="Brusic V."/>
            <person name="Quackenbush J."/>
            <person name="Wahlestedt C."/>
            <person name="Mattick J.S."/>
            <person name="Hume D.A."/>
            <person name="Kai C."/>
            <person name="Sasaki D."/>
            <person name="Tomaru Y."/>
            <person name="Fukuda S."/>
            <person name="Kanamori-Katayama M."/>
            <person name="Suzuki M."/>
            <person name="Aoki J."/>
            <person name="Arakawa T."/>
            <person name="Iida J."/>
            <person name="Imamura K."/>
            <person name="Itoh M."/>
            <person name="Kato T."/>
            <person name="Kawaji H."/>
            <person name="Kawagashira N."/>
            <person name="Kawashima T."/>
            <person name="Kojima M."/>
            <person name="Kondo S."/>
            <person name="Konno H."/>
            <person name="Nakano K."/>
            <person name="Ninomiya N."/>
            <person name="Nishio T."/>
            <person name="Okada M."/>
            <person name="Plessy C."/>
            <person name="Shibata K."/>
            <person name="Shiraki T."/>
            <person name="Suzuki S."/>
            <person name="Tagami M."/>
            <person name="Waki K."/>
            <person name="Watahiki A."/>
            <person name="Okamura-Oho Y."/>
            <person name="Suzuki H."/>
            <person name="Kawai J."/>
            <person name="Hayashizaki Y."/>
        </authorList>
    </citation>
    <scope>NUCLEOTIDE SEQUENCE [LARGE SCALE MRNA] (ISOFORMS 1 AND 2)</scope>
    <source>
        <strain>C57BL/6J</strain>
        <tissue>Cecum</tissue>
        <tissue>Colon</tissue>
    </source>
</reference>
<reference key="4">
    <citation type="journal article" date="2004" name="Genome Res.">
        <title>The status, quality, and expansion of the NIH full-length cDNA project: the Mammalian Gene Collection (MGC).</title>
        <authorList>
            <consortium name="The MGC Project Team"/>
        </authorList>
    </citation>
    <scope>NUCLEOTIDE SEQUENCE [LARGE SCALE MRNA] (ISOFORM 1)</scope>
</reference>
<gene>
    <name type="primary">Lgals12</name>
</gene>
<dbReference type="EMBL" id="AF244979">
    <property type="protein sequence ID" value="AAK77327.1"/>
    <property type="molecule type" value="mRNA"/>
</dbReference>
<dbReference type="EMBL" id="AF244978">
    <property type="protein sequence ID" value="AAK77326.1"/>
    <property type="molecule type" value="mRNA"/>
</dbReference>
<dbReference type="EMBL" id="AF223223">
    <property type="protein sequence ID" value="AAF34682.1"/>
    <property type="molecule type" value="mRNA"/>
</dbReference>
<dbReference type="EMBL" id="AK033535">
    <property type="protein sequence ID" value="BAC28345.1"/>
    <property type="molecule type" value="mRNA"/>
</dbReference>
<dbReference type="EMBL" id="AK136526">
    <property type="protein sequence ID" value="BAE23026.1"/>
    <property type="molecule type" value="mRNA"/>
</dbReference>
<dbReference type="EMBL" id="BC030890">
    <property type="protein sequence ID" value="AAH30890.1"/>
    <property type="molecule type" value="mRNA"/>
</dbReference>
<dbReference type="CCDS" id="CCDS29529.1">
    <molecule id="Q91VD1-1"/>
</dbReference>
<dbReference type="CCDS" id="CCDS89332.1">
    <molecule id="Q91VD1-2"/>
</dbReference>
<dbReference type="RefSeq" id="NP_001343503.1">
    <molecule id="Q91VD1-1"/>
    <property type="nucleotide sequence ID" value="NM_001356574.2"/>
</dbReference>
<dbReference type="RefSeq" id="NP_001357615.1">
    <molecule id="Q91VD1-2"/>
    <property type="nucleotide sequence ID" value="NM_001370686.1"/>
</dbReference>
<dbReference type="RefSeq" id="NP_062389.1">
    <molecule id="Q91VD1-1"/>
    <property type="nucleotide sequence ID" value="NM_019516.5"/>
</dbReference>
<dbReference type="RefSeq" id="XP_006527282.1">
    <property type="nucleotide sequence ID" value="XM_006527219.3"/>
</dbReference>
<dbReference type="SMR" id="Q91VD1"/>
<dbReference type="FunCoup" id="Q91VD1">
    <property type="interactions" value="764"/>
</dbReference>
<dbReference type="STRING" id="10090.ENSMUSP00000097318"/>
<dbReference type="PhosphoSitePlus" id="Q91VD1"/>
<dbReference type="PaxDb" id="10090-ENSMUSP00000097318"/>
<dbReference type="ProteomicsDB" id="264730">
    <molecule id="Q91VD1-1"/>
</dbReference>
<dbReference type="ProteomicsDB" id="264731">
    <molecule id="Q91VD1-2"/>
</dbReference>
<dbReference type="Antibodypedia" id="28944">
    <property type="antibodies" value="116 antibodies from 14 providers"/>
</dbReference>
<dbReference type="DNASU" id="56072"/>
<dbReference type="Ensembl" id="ENSMUST00000079902.6">
    <molecule id="Q91VD1-2"/>
    <property type="protein sequence ID" value="ENSMUSP00000078824.6"/>
    <property type="gene ID" value="ENSMUSG00000024972.17"/>
</dbReference>
<dbReference type="Ensembl" id="ENSMUST00000099729.10">
    <molecule id="Q91VD1-1"/>
    <property type="protein sequence ID" value="ENSMUSP00000097318.4"/>
    <property type="gene ID" value="ENSMUSG00000024972.17"/>
</dbReference>
<dbReference type="Ensembl" id="ENSMUST00000159983.8">
    <molecule id="Q91VD1-1"/>
    <property type="protein sequence ID" value="ENSMUSP00000124610.2"/>
    <property type="gene ID" value="ENSMUSG00000024972.17"/>
</dbReference>
<dbReference type="GeneID" id="56072"/>
<dbReference type="KEGG" id="mmu:56072"/>
<dbReference type="UCSC" id="uc008glk.1">
    <molecule id="Q91VD1-1"/>
    <property type="organism name" value="mouse"/>
</dbReference>
<dbReference type="UCSC" id="uc012bhx.1">
    <molecule id="Q91VD1-2"/>
    <property type="organism name" value="mouse"/>
</dbReference>
<dbReference type="AGR" id="MGI:1929094"/>
<dbReference type="CTD" id="85329"/>
<dbReference type="MGI" id="MGI:1929094">
    <property type="gene designation" value="Lgals12"/>
</dbReference>
<dbReference type="VEuPathDB" id="HostDB:ENSMUSG00000024972"/>
<dbReference type="eggNOG" id="KOG3587">
    <property type="taxonomic scope" value="Eukaryota"/>
</dbReference>
<dbReference type="GeneTree" id="ENSGT00940000161499"/>
<dbReference type="HOGENOM" id="CLU_037794_1_0_1"/>
<dbReference type="InParanoid" id="Q91VD1"/>
<dbReference type="OMA" id="YPTGHPF"/>
<dbReference type="OrthoDB" id="6251307at2759"/>
<dbReference type="PhylomeDB" id="Q91VD1"/>
<dbReference type="BioGRID-ORCS" id="56072">
    <property type="hits" value="1 hit in 75 CRISPR screens"/>
</dbReference>
<dbReference type="PRO" id="PR:Q91VD1"/>
<dbReference type="Proteomes" id="UP000000589">
    <property type="component" value="Chromosome 19"/>
</dbReference>
<dbReference type="RNAct" id="Q91VD1">
    <property type="molecule type" value="protein"/>
</dbReference>
<dbReference type="Bgee" id="ENSMUSG00000024972">
    <property type="expression patterns" value="Expressed in epididymal fat pad and 95 other cell types or tissues"/>
</dbReference>
<dbReference type="GO" id="GO:0005739">
    <property type="term" value="C:mitochondrion"/>
    <property type="evidence" value="ECO:0000314"/>
    <property type="project" value="MGI"/>
</dbReference>
<dbReference type="GO" id="GO:0005634">
    <property type="term" value="C:nucleus"/>
    <property type="evidence" value="ECO:0000314"/>
    <property type="project" value="MGI"/>
</dbReference>
<dbReference type="GO" id="GO:0030395">
    <property type="term" value="F:lactose binding"/>
    <property type="evidence" value="ECO:0000266"/>
    <property type="project" value="MGI"/>
</dbReference>
<dbReference type="GO" id="GO:0097193">
    <property type="term" value="P:intrinsic apoptotic signaling pathway"/>
    <property type="evidence" value="ECO:0000266"/>
    <property type="project" value="MGI"/>
</dbReference>
<dbReference type="CDD" id="cd00070">
    <property type="entry name" value="GLECT"/>
    <property type="match status" value="1"/>
</dbReference>
<dbReference type="FunFam" id="2.60.120.200:FF:000115">
    <property type="entry name" value="Galectin"/>
    <property type="match status" value="1"/>
</dbReference>
<dbReference type="FunFam" id="2.60.120.200:FF:000156">
    <property type="entry name" value="Galectin"/>
    <property type="match status" value="1"/>
</dbReference>
<dbReference type="Gene3D" id="2.60.120.200">
    <property type="match status" value="2"/>
</dbReference>
<dbReference type="InterPro" id="IPR013320">
    <property type="entry name" value="ConA-like_dom_sf"/>
</dbReference>
<dbReference type="InterPro" id="IPR044156">
    <property type="entry name" value="Galectin-like"/>
</dbReference>
<dbReference type="InterPro" id="IPR001079">
    <property type="entry name" value="Galectin_CRD"/>
</dbReference>
<dbReference type="PANTHER" id="PTHR11346">
    <property type="entry name" value="GALECTIN"/>
    <property type="match status" value="1"/>
</dbReference>
<dbReference type="PANTHER" id="PTHR11346:SF111">
    <property type="entry name" value="GALECTIN-12"/>
    <property type="match status" value="1"/>
</dbReference>
<dbReference type="Pfam" id="PF00337">
    <property type="entry name" value="Gal-bind_lectin"/>
    <property type="match status" value="2"/>
</dbReference>
<dbReference type="SMART" id="SM00908">
    <property type="entry name" value="Gal-bind_lectin"/>
    <property type="match status" value="2"/>
</dbReference>
<dbReference type="SMART" id="SM00276">
    <property type="entry name" value="GLECT"/>
    <property type="match status" value="1"/>
</dbReference>
<dbReference type="SUPFAM" id="SSF49899">
    <property type="entry name" value="Concanavalin A-like lectins/glucanases"/>
    <property type="match status" value="2"/>
</dbReference>
<dbReference type="PROSITE" id="PS51304">
    <property type="entry name" value="GALECTIN"/>
    <property type="match status" value="2"/>
</dbReference>
<feature type="chain" id="PRO_0000076950" description="Galectin-12">
    <location>
        <begin position="1"/>
        <end position="314"/>
    </location>
</feature>
<feature type="domain" description="Galectin 1" evidence="1">
    <location>
        <begin position="27"/>
        <end position="161"/>
    </location>
</feature>
<feature type="domain" description="Galectin 2" evidence="1">
    <location>
        <begin position="190"/>
        <end position="314"/>
    </location>
</feature>
<feature type="splice variant" id="VSP_010321" description="In isoform 2." evidence="2">
    <location>
        <begin position="167"/>
        <end position="179"/>
    </location>
</feature>
<feature type="sequence conflict" description="In Ref. 1; AAK77327/AAK77326." evidence="3" ref="1">
    <original>V</original>
    <variation>A</variation>
    <location>
        <position position="228"/>
    </location>
</feature>
<feature type="sequence conflict" description="In Ref. 4; AAH30890." evidence="3" ref="4">
    <original>E</original>
    <variation>K</variation>
    <location>
        <position position="273"/>
    </location>
</feature>